<gene>
    <name type="primary">SEPHS1</name>
    <name type="synonym">SELD</name>
    <name type="synonym">SPS</name>
    <name type="synonym">SPS1</name>
</gene>
<dbReference type="EC" id="2.7.9.3" evidence="5"/>
<dbReference type="EMBL" id="U34044">
    <property type="protein sequence ID" value="AAA87567.1"/>
    <property type="status" value="ALT_FRAME"/>
    <property type="molecule type" value="mRNA"/>
</dbReference>
<dbReference type="EMBL" id="GU954545">
    <property type="protein sequence ID" value="ADF78120.1"/>
    <property type="molecule type" value="mRNA"/>
</dbReference>
<dbReference type="EMBL" id="GU954546">
    <property type="protein sequence ID" value="ADF78121.1"/>
    <property type="molecule type" value="mRNA"/>
</dbReference>
<dbReference type="EMBL" id="GU954547">
    <property type="protein sequence ID" value="ADF78122.1"/>
    <property type="molecule type" value="mRNA"/>
</dbReference>
<dbReference type="EMBL" id="GU954548">
    <property type="protein sequence ID" value="ADF78123.1"/>
    <property type="molecule type" value="mRNA"/>
</dbReference>
<dbReference type="EMBL" id="GU954549">
    <property type="protein sequence ID" value="ADF78124.1"/>
    <property type="molecule type" value="mRNA"/>
</dbReference>
<dbReference type="EMBL" id="AK301568">
    <property type="protein sequence ID" value="BAG63062.1"/>
    <property type="molecule type" value="mRNA"/>
</dbReference>
<dbReference type="EMBL" id="AL138764">
    <property type="status" value="NOT_ANNOTATED_CDS"/>
    <property type="molecule type" value="Genomic_DNA"/>
</dbReference>
<dbReference type="EMBL" id="AL355870">
    <property type="status" value="NOT_ANNOTATED_CDS"/>
    <property type="molecule type" value="Genomic_DNA"/>
</dbReference>
<dbReference type="EMBL" id="CH471072">
    <property type="protein sequence ID" value="EAW86289.1"/>
    <property type="molecule type" value="Genomic_DNA"/>
</dbReference>
<dbReference type="EMBL" id="CH471072">
    <property type="protein sequence ID" value="EAW86290.1"/>
    <property type="molecule type" value="Genomic_DNA"/>
</dbReference>
<dbReference type="EMBL" id="CH471072">
    <property type="protein sequence ID" value="EAW86291.1"/>
    <property type="molecule type" value="Genomic_DNA"/>
</dbReference>
<dbReference type="EMBL" id="CH471072">
    <property type="protein sequence ID" value="EAW86292.1"/>
    <property type="molecule type" value="Genomic_DNA"/>
</dbReference>
<dbReference type="EMBL" id="CH471072">
    <property type="protein sequence ID" value="EAW86293.1"/>
    <property type="molecule type" value="Genomic_DNA"/>
</dbReference>
<dbReference type="EMBL" id="BC000941">
    <property type="protein sequence ID" value="AAH00941.1"/>
    <property type="molecule type" value="mRNA"/>
</dbReference>
<dbReference type="EMBL" id="BC063816">
    <property type="protein sequence ID" value="AAH63816.1"/>
    <property type="molecule type" value="mRNA"/>
</dbReference>
<dbReference type="CCDS" id="CCDS55702.1">
    <molecule id="P49903-3"/>
</dbReference>
<dbReference type="CCDS" id="CCDS55703.1">
    <molecule id="P49903-2"/>
</dbReference>
<dbReference type="CCDS" id="CCDS7098.1">
    <molecule id="P49903-1"/>
</dbReference>
<dbReference type="RefSeq" id="NP_001182531.1">
    <molecule id="P49903-3"/>
    <property type="nucleotide sequence ID" value="NM_001195602.2"/>
</dbReference>
<dbReference type="RefSeq" id="NP_001182533.1">
    <molecule id="P49903-2"/>
    <property type="nucleotide sequence ID" value="NM_001195604.2"/>
</dbReference>
<dbReference type="RefSeq" id="NP_036379.2">
    <molecule id="P49903-1"/>
    <property type="nucleotide sequence ID" value="NM_012247.4"/>
</dbReference>
<dbReference type="RefSeq" id="XP_016871431.1">
    <property type="nucleotide sequence ID" value="XM_017015942.1"/>
</dbReference>
<dbReference type="RefSeq" id="XP_016871432.1">
    <property type="nucleotide sequence ID" value="XM_017015943.1"/>
</dbReference>
<dbReference type="RefSeq" id="XP_016871434.1">
    <property type="nucleotide sequence ID" value="XM_017015945.1"/>
</dbReference>
<dbReference type="RefSeq" id="XP_047280795.1">
    <molecule id="P49903-1"/>
    <property type="nucleotide sequence ID" value="XM_047424839.1"/>
</dbReference>
<dbReference type="RefSeq" id="XP_054221208.1">
    <molecule id="P49903-1"/>
    <property type="nucleotide sequence ID" value="XM_054365233.1"/>
</dbReference>
<dbReference type="PDB" id="3FD5">
    <property type="method" value="X-ray"/>
    <property type="resolution" value="1.90 A"/>
    <property type="chains" value="A/B=1-392"/>
</dbReference>
<dbReference type="PDB" id="3FD6">
    <property type="method" value="X-ray"/>
    <property type="resolution" value="1.95 A"/>
    <property type="chains" value="A/B=1-392"/>
</dbReference>
<dbReference type="PDBsum" id="3FD5"/>
<dbReference type="PDBsum" id="3FD6"/>
<dbReference type="SMR" id="P49903"/>
<dbReference type="BioGRID" id="116589">
    <property type="interactions" value="76"/>
</dbReference>
<dbReference type="CORUM" id="P49903"/>
<dbReference type="FunCoup" id="P49903">
    <property type="interactions" value="1535"/>
</dbReference>
<dbReference type="IntAct" id="P49903">
    <property type="interactions" value="27"/>
</dbReference>
<dbReference type="MINT" id="P49903"/>
<dbReference type="STRING" id="9606.ENSP00000367893"/>
<dbReference type="GlyGen" id="P49903">
    <property type="glycosylation" value="3 sites, 1 O-linked glycan (1 site)"/>
</dbReference>
<dbReference type="iPTMnet" id="P49903"/>
<dbReference type="MetOSite" id="P49903"/>
<dbReference type="PhosphoSitePlus" id="P49903"/>
<dbReference type="SwissPalm" id="P49903"/>
<dbReference type="BioMuta" id="SEPHS1"/>
<dbReference type="DMDM" id="27151792"/>
<dbReference type="jPOST" id="P49903"/>
<dbReference type="MassIVE" id="P49903"/>
<dbReference type="PaxDb" id="9606-ENSP00000367893"/>
<dbReference type="PeptideAtlas" id="P49903"/>
<dbReference type="ProteomicsDB" id="12836"/>
<dbReference type="ProteomicsDB" id="5348"/>
<dbReference type="ProteomicsDB" id="56175">
    <molecule id="P49903-1"/>
</dbReference>
<dbReference type="ProteomicsDB" id="64555"/>
<dbReference type="Pumba" id="P49903"/>
<dbReference type="Antibodypedia" id="24810">
    <property type="antibodies" value="197 antibodies from 31 providers"/>
</dbReference>
<dbReference type="DNASU" id="22929"/>
<dbReference type="Ensembl" id="ENST00000327347.10">
    <molecule id="P49903-1"/>
    <property type="protein sequence ID" value="ENSP00000367893.3"/>
    <property type="gene ID" value="ENSG00000086475.15"/>
</dbReference>
<dbReference type="Ensembl" id="ENST00000378614.8">
    <molecule id="P49903-2"/>
    <property type="protein sequence ID" value="ENSP00000367877.3"/>
    <property type="gene ID" value="ENSG00000086475.15"/>
</dbReference>
<dbReference type="Ensembl" id="ENST00000545675.5">
    <molecule id="P49903-3"/>
    <property type="protein sequence ID" value="ENSP00000441119.2"/>
    <property type="gene ID" value="ENSG00000086475.15"/>
</dbReference>
<dbReference type="GeneID" id="22929"/>
<dbReference type="KEGG" id="hsa:22929"/>
<dbReference type="MANE-Select" id="ENST00000327347.10">
    <property type="protein sequence ID" value="ENSP00000367893.3"/>
    <property type="RefSeq nucleotide sequence ID" value="NM_012247.5"/>
    <property type="RefSeq protein sequence ID" value="NP_036379.2"/>
</dbReference>
<dbReference type="UCSC" id="uc001imk.4">
    <molecule id="P49903-1"/>
    <property type="organism name" value="human"/>
</dbReference>
<dbReference type="AGR" id="HGNC:19685"/>
<dbReference type="CTD" id="22929"/>
<dbReference type="DisGeNET" id="22929"/>
<dbReference type="GeneCards" id="SEPHS1"/>
<dbReference type="HGNC" id="HGNC:19685">
    <property type="gene designation" value="SEPHS1"/>
</dbReference>
<dbReference type="HPA" id="ENSG00000086475">
    <property type="expression patterns" value="Low tissue specificity"/>
</dbReference>
<dbReference type="MIM" id="600902">
    <property type="type" value="gene"/>
</dbReference>
<dbReference type="neXtProt" id="NX_P49903"/>
<dbReference type="OpenTargets" id="ENSG00000086475"/>
<dbReference type="PharmGKB" id="PA134905215"/>
<dbReference type="VEuPathDB" id="HostDB:ENSG00000086475"/>
<dbReference type="eggNOG" id="KOG3939">
    <property type="taxonomic scope" value="Eukaryota"/>
</dbReference>
<dbReference type="GeneTree" id="ENSGT00390000000950"/>
<dbReference type="HOGENOM" id="CLU_032859_1_0_1"/>
<dbReference type="InParanoid" id="P49903"/>
<dbReference type="OMA" id="LARDWMC"/>
<dbReference type="OrthoDB" id="9471920at2759"/>
<dbReference type="PAN-GO" id="P49903">
    <property type="GO annotations" value="3 GO annotations based on evolutionary models"/>
</dbReference>
<dbReference type="PhylomeDB" id="P49903"/>
<dbReference type="TreeFam" id="TF313811"/>
<dbReference type="BRENDA" id="2.7.9.3">
    <property type="organism ID" value="2681"/>
</dbReference>
<dbReference type="PathwayCommons" id="P49903"/>
<dbReference type="SignaLink" id="P49903"/>
<dbReference type="BioGRID-ORCS" id="22929">
    <property type="hits" value="143 hits in 1159 CRISPR screens"/>
</dbReference>
<dbReference type="ChiTaRS" id="SEPHS1">
    <property type="organism name" value="human"/>
</dbReference>
<dbReference type="EvolutionaryTrace" id="P49903"/>
<dbReference type="GeneWiki" id="Selenophosphate_synthetase_1"/>
<dbReference type="GenomeRNAi" id="22929"/>
<dbReference type="Pharos" id="P49903">
    <property type="development level" value="Tbio"/>
</dbReference>
<dbReference type="PRO" id="PR:P49903"/>
<dbReference type="Proteomes" id="UP000005640">
    <property type="component" value="Chromosome 10"/>
</dbReference>
<dbReference type="RNAct" id="P49903">
    <property type="molecule type" value="protein"/>
</dbReference>
<dbReference type="Bgee" id="ENSG00000086475">
    <property type="expression patterns" value="Expressed in ventricular zone and 202 other cell types or tissues"/>
</dbReference>
<dbReference type="ExpressionAtlas" id="P49903">
    <property type="expression patterns" value="baseline and differential"/>
</dbReference>
<dbReference type="GO" id="GO:0005737">
    <property type="term" value="C:cytoplasm"/>
    <property type="evidence" value="ECO:0000314"/>
    <property type="project" value="UniProtKB"/>
</dbReference>
<dbReference type="GO" id="GO:0031965">
    <property type="term" value="C:nuclear membrane"/>
    <property type="evidence" value="ECO:0000314"/>
    <property type="project" value="UniProtKB"/>
</dbReference>
<dbReference type="GO" id="GO:0005886">
    <property type="term" value="C:plasma membrane"/>
    <property type="evidence" value="ECO:0000314"/>
    <property type="project" value="UniProtKB"/>
</dbReference>
<dbReference type="GO" id="GO:0005524">
    <property type="term" value="F:ATP binding"/>
    <property type="evidence" value="ECO:0000304"/>
    <property type="project" value="ProtInc"/>
</dbReference>
<dbReference type="GO" id="GO:0005525">
    <property type="term" value="F:GTP binding"/>
    <property type="evidence" value="ECO:0000304"/>
    <property type="project" value="ProtInc"/>
</dbReference>
<dbReference type="GO" id="GO:0042802">
    <property type="term" value="F:identical protein binding"/>
    <property type="evidence" value="ECO:0000353"/>
    <property type="project" value="IntAct"/>
</dbReference>
<dbReference type="GO" id="GO:0046872">
    <property type="term" value="F:metal ion binding"/>
    <property type="evidence" value="ECO:0007669"/>
    <property type="project" value="UniProtKB-KW"/>
</dbReference>
<dbReference type="GO" id="GO:0046982">
    <property type="term" value="F:protein heterodimerization activity"/>
    <property type="evidence" value="ECO:0000314"/>
    <property type="project" value="UniProtKB"/>
</dbReference>
<dbReference type="GO" id="GO:0042803">
    <property type="term" value="F:protein homodimerization activity"/>
    <property type="evidence" value="ECO:0000314"/>
    <property type="project" value="UniProtKB"/>
</dbReference>
<dbReference type="GO" id="GO:0004756">
    <property type="term" value="F:selenide, water dikinase activity"/>
    <property type="evidence" value="ECO:0000318"/>
    <property type="project" value="GO_Central"/>
</dbReference>
<dbReference type="GO" id="GO:0036211">
    <property type="term" value="P:protein modification process"/>
    <property type="evidence" value="ECO:0000304"/>
    <property type="project" value="ProtInc"/>
</dbReference>
<dbReference type="GO" id="GO:0016260">
    <property type="term" value="P:selenocysteine biosynthetic process"/>
    <property type="evidence" value="ECO:0000318"/>
    <property type="project" value="GO_Central"/>
</dbReference>
<dbReference type="CDD" id="cd02195">
    <property type="entry name" value="SelD"/>
    <property type="match status" value="1"/>
</dbReference>
<dbReference type="FunFam" id="3.30.1330.10:FF:000006">
    <property type="entry name" value="Selenide water dikinase 1"/>
    <property type="match status" value="1"/>
</dbReference>
<dbReference type="FunFam" id="3.90.650.10:FF:000003">
    <property type="entry name" value="Selenide, water dikinase 1"/>
    <property type="match status" value="1"/>
</dbReference>
<dbReference type="Gene3D" id="3.90.650.10">
    <property type="entry name" value="PurM-like C-terminal domain"/>
    <property type="match status" value="1"/>
</dbReference>
<dbReference type="Gene3D" id="3.30.1330.10">
    <property type="entry name" value="PurM-like, N-terminal domain"/>
    <property type="match status" value="1"/>
</dbReference>
<dbReference type="InterPro" id="IPR010918">
    <property type="entry name" value="PurM-like_C_dom"/>
</dbReference>
<dbReference type="InterPro" id="IPR036676">
    <property type="entry name" value="PurM-like_C_sf"/>
</dbReference>
<dbReference type="InterPro" id="IPR016188">
    <property type="entry name" value="PurM-like_N"/>
</dbReference>
<dbReference type="InterPro" id="IPR036921">
    <property type="entry name" value="PurM-like_N_sf"/>
</dbReference>
<dbReference type="InterPro" id="IPR004536">
    <property type="entry name" value="SPS/SelD"/>
</dbReference>
<dbReference type="NCBIfam" id="TIGR00476">
    <property type="entry name" value="selD"/>
    <property type="match status" value="1"/>
</dbReference>
<dbReference type="PANTHER" id="PTHR10256">
    <property type="entry name" value="SELENIDE, WATER DIKINASE"/>
    <property type="match status" value="1"/>
</dbReference>
<dbReference type="PANTHER" id="PTHR10256:SF2">
    <property type="entry name" value="SELENIDE, WATER DIKINASE 1"/>
    <property type="match status" value="1"/>
</dbReference>
<dbReference type="Pfam" id="PF00586">
    <property type="entry name" value="AIRS"/>
    <property type="match status" value="1"/>
</dbReference>
<dbReference type="Pfam" id="PF02769">
    <property type="entry name" value="AIRS_C"/>
    <property type="match status" value="1"/>
</dbReference>
<dbReference type="PIRSF" id="PIRSF036407">
    <property type="entry name" value="Selenphspht_syn"/>
    <property type="match status" value="1"/>
</dbReference>
<dbReference type="SUPFAM" id="SSF56042">
    <property type="entry name" value="PurM C-terminal domain-like"/>
    <property type="match status" value="1"/>
</dbReference>
<dbReference type="SUPFAM" id="SSF55326">
    <property type="entry name" value="PurM N-terminal domain-like"/>
    <property type="match status" value="1"/>
</dbReference>
<proteinExistence type="evidence at protein level"/>
<accession>P49903</accession>
<accession>B4DWK0</accession>
<accession>D3DRS9</accession>
<accession>D6PSQ9</accession>
<accession>Q5T5U8</accession>
<accession>Q5T5U9</accession>
<accession>Q9BVT4</accession>
<keyword id="KW-0002">3D-structure</keyword>
<keyword id="KW-0007">Acetylation</keyword>
<keyword id="KW-0025">Alternative splicing</keyword>
<keyword id="KW-0067">ATP-binding</keyword>
<keyword id="KW-1003">Cell membrane</keyword>
<keyword id="KW-0963">Cytoplasm</keyword>
<keyword id="KW-0903">Direct protein sequencing</keyword>
<keyword id="KW-0418">Kinase</keyword>
<keyword id="KW-0460">Magnesium</keyword>
<keyword id="KW-0472">Membrane</keyword>
<keyword id="KW-0479">Metal-binding</keyword>
<keyword id="KW-0547">Nucleotide-binding</keyword>
<keyword id="KW-0539">Nucleus</keyword>
<keyword id="KW-1267">Proteomics identification</keyword>
<keyword id="KW-1185">Reference proteome</keyword>
<keyword id="KW-0711">Selenium</keyword>
<keyword id="KW-0808">Transferase</keyword>
<sequence length="392" mass="42911">MSTRESFNPESYELDKSFRLTRFTELKGTGCKVPQDVLQKLLESLQENHFQEDEQFLGAVMPRLGIGMDTCVIPLRHGGLSLVQTTDYIYPIVDDPYMMGRIACANVLSDLYAMGVTECDNMLMLLGVSNKMTDRERDKVMPLIIQGFKDAAEEAGTSVTGGQTVLNPWIVLGGVATTVCQPNEFIMPDNAVPGDVLVLTKPLGTQVAVAVHQWLDIPEKWNKIKLVVTQEDVELAYQEAMMNMARLNRTAAGLMHTFNAHAATDITGFGILGHAQNLAKQQRNEVSFVIHNLPVLAKMAAVSKACGNMFGLMHGTCPETSGGLLICLPREQAARFCAEIKSPKYGEGHQAWIIGIVEKGNRTARIIDKPRIIEVAPQVATQNVNPTPGATS</sequence>
<evidence type="ECO:0000250" key="1">
    <source>
        <dbReference type="UniProtKB" id="P16456"/>
    </source>
</evidence>
<evidence type="ECO:0000255" key="2"/>
<evidence type="ECO:0000269" key="3">
    <source>
    </source>
</evidence>
<evidence type="ECO:0000269" key="4">
    <source>
    </source>
</evidence>
<evidence type="ECO:0000269" key="5">
    <source>
    </source>
</evidence>
<evidence type="ECO:0000303" key="6">
    <source>
    </source>
</evidence>
<evidence type="ECO:0000303" key="7">
    <source>
    </source>
</evidence>
<evidence type="ECO:0000305" key="8"/>
<evidence type="ECO:0007744" key="9">
    <source>
        <dbReference type="PDB" id="3FD5"/>
    </source>
</evidence>
<evidence type="ECO:0007744" key="10">
    <source>
        <dbReference type="PDB" id="3FD6"/>
    </source>
</evidence>
<evidence type="ECO:0007744" key="11">
    <source>
    </source>
</evidence>
<evidence type="ECO:0007829" key="12">
    <source>
        <dbReference type="PDB" id="3FD5"/>
    </source>
</evidence>
<organism>
    <name type="scientific">Homo sapiens</name>
    <name type="common">Human</name>
    <dbReference type="NCBI Taxonomy" id="9606"/>
    <lineage>
        <taxon>Eukaryota</taxon>
        <taxon>Metazoa</taxon>
        <taxon>Chordata</taxon>
        <taxon>Craniata</taxon>
        <taxon>Vertebrata</taxon>
        <taxon>Euteleostomi</taxon>
        <taxon>Mammalia</taxon>
        <taxon>Eutheria</taxon>
        <taxon>Euarchontoglires</taxon>
        <taxon>Primates</taxon>
        <taxon>Haplorrhini</taxon>
        <taxon>Catarrhini</taxon>
        <taxon>Hominidae</taxon>
        <taxon>Homo</taxon>
    </lineage>
</organism>
<protein>
    <recommendedName>
        <fullName>Selenide, water dikinase 1</fullName>
        <ecNumber evidence="5">2.7.9.3</ecNumber>
    </recommendedName>
    <alternativeName>
        <fullName>Selenium donor protein 1</fullName>
    </alternativeName>
    <alternativeName>
        <fullName>Selenophosphate synthase 1</fullName>
    </alternativeName>
</protein>
<name>SPS1_HUMAN</name>
<reference key="1">
    <citation type="journal article" date="1995" name="J. Biol. Chem.">
        <title>Cloning and functional characterization of human selenophosphate synthetase, an essential component of selenoprotein synthesis.</title>
        <authorList>
            <person name="Low S.C."/>
            <person name="Harney J.W."/>
            <person name="Berry M.J."/>
        </authorList>
    </citation>
    <scope>NUCLEOTIDE SEQUENCE [MRNA] (ISOFORM 1)</scope>
    <scope>FUNCTION</scope>
    <scope>CATALYTIC ACTIVITY</scope>
    <scope>ATP-BINDING</scope>
    <scope>MUTAGENESIS OF GLY-268; GLY-270; GLY-273 AND HIS-274</scope>
    <source>
        <tissue>Liver</tissue>
    </source>
</reference>
<reference key="2">
    <citation type="journal article" date="2010" name="Biochem. Biophys. Res. Commun.">
        <title>Human selenophosphate synthetase 1 has five splice variants with unique interactions, subcellular localizations and expression patterns.</title>
        <authorList>
            <person name="Kim J.Y."/>
            <person name="Lee K.H."/>
            <person name="Shim M.S."/>
            <person name="Shin H."/>
            <person name="Xu X.M."/>
            <person name="Carlson B.A."/>
            <person name="Hatfield D.L."/>
            <person name="Lee B.J."/>
        </authorList>
    </citation>
    <scope>NUCLEOTIDE SEQUENCE [MRNA] (ISOFORMS 1; 2; 3 AND 4)</scope>
    <scope>SUBUNIT</scope>
    <scope>SUBCELLULAR LOCATION</scope>
    <scope>TISSUE SPECIFICITY</scope>
</reference>
<reference key="3">
    <citation type="journal article" date="2004" name="Nat. Genet.">
        <title>Complete sequencing and characterization of 21,243 full-length human cDNAs.</title>
        <authorList>
            <person name="Ota T."/>
            <person name="Suzuki Y."/>
            <person name="Nishikawa T."/>
            <person name="Otsuki T."/>
            <person name="Sugiyama T."/>
            <person name="Irie R."/>
            <person name="Wakamatsu A."/>
            <person name="Hayashi K."/>
            <person name="Sato H."/>
            <person name="Nagai K."/>
            <person name="Kimura K."/>
            <person name="Makita H."/>
            <person name="Sekine M."/>
            <person name="Obayashi M."/>
            <person name="Nishi T."/>
            <person name="Shibahara T."/>
            <person name="Tanaka T."/>
            <person name="Ishii S."/>
            <person name="Yamamoto J."/>
            <person name="Saito K."/>
            <person name="Kawai Y."/>
            <person name="Isono Y."/>
            <person name="Nakamura Y."/>
            <person name="Nagahari K."/>
            <person name="Murakami K."/>
            <person name="Yasuda T."/>
            <person name="Iwayanagi T."/>
            <person name="Wagatsuma M."/>
            <person name="Shiratori A."/>
            <person name="Sudo H."/>
            <person name="Hosoiri T."/>
            <person name="Kaku Y."/>
            <person name="Kodaira H."/>
            <person name="Kondo H."/>
            <person name="Sugawara M."/>
            <person name="Takahashi M."/>
            <person name="Kanda K."/>
            <person name="Yokoi T."/>
            <person name="Furuya T."/>
            <person name="Kikkawa E."/>
            <person name="Omura Y."/>
            <person name="Abe K."/>
            <person name="Kamihara K."/>
            <person name="Katsuta N."/>
            <person name="Sato K."/>
            <person name="Tanikawa M."/>
            <person name="Yamazaki M."/>
            <person name="Ninomiya K."/>
            <person name="Ishibashi T."/>
            <person name="Yamashita H."/>
            <person name="Murakawa K."/>
            <person name="Fujimori K."/>
            <person name="Tanai H."/>
            <person name="Kimata M."/>
            <person name="Watanabe M."/>
            <person name="Hiraoka S."/>
            <person name="Chiba Y."/>
            <person name="Ishida S."/>
            <person name="Ono Y."/>
            <person name="Takiguchi S."/>
            <person name="Watanabe S."/>
            <person name="Yosida M."/>
            <person name="Hotuta T."/>
            <person name="Kusano J."/>
            <person name="Kanehori K."/>
            <person name="Takahashi-Fujii A."/>
            <person name="Hara H."/>
            <person name="Tanase T.-O."/>
            <person name="Nomura Y."/>
            <person name="Togiya S."/>
            <person name="Komai F."/>
            <person name="Hara R."/>
            <person name="Takeuchi K."/>
            <person name="Arita M."/>
            <person name="Imose N."/>
            <person name="Musashino K."/>
            <person name="Yuuki H."/>
            <person name="Oshima A."/>
            <person name="Sasaki N."/>
            <person name="Aotsuka S."/>
            <person name="Yoshikawa Y."/>
            <person name="Matsunawa H."/>
            <person name="Ichihara T."/>
            <person name="Shiohata N."/>
            <person name="Sano S."/>
            <person name="Moriya S."/>
            <person name="Momiyama H."/>
            <person name="Satoh N."/>
            <person name="Takami S."/>
            <person name="Terashima Y."/>
            <person name="Suzuki O."/>
            <person name="Nakagawa S."/>
            <person name="Senoh A."/>
            <person name="Mizoguchi H."/>
            <person name="Goto Y."/>
            <person name="Shimizu F."/>
            <person name="Wakebe H."/>
            <person name="Hishigaki H."/>
            <person name="Watanabe T."/>
            <person name="Sugiyama A."/>
            <person name="Takemoto M."/>
            <person name="Kawakami B."/>
            <person name="Yamazaki M."/>
            <person name="Watanabe K."/>
            <person name="Kumagai A."/>
            <person name="Itakura S."/>
            <person name="Fukuzumi Y."/>
            <person name="Fujimori Y."/>
            <person name="Komiyama M."/>
            <person name="Tashiro H."/>
            <person name="Tanigami A."/>
            <person name="Fujiwara T."/>
            <person name="Ono T."/>
            <person name="Yamada K."/>
            <person name="Fujii Y."/>
            <person name="Ozaki K."/>
            <person name="Hirao M."/>
            <person name="Ohmori Y."/>
            <person name="Kawabata A."/>
            <person name="Hikiji T."/>
            <person name="Kobatake N."/>
            <person name="Inagaki H."/>
            <person name="Ikema Y."/>
            <person name="Okamoto S."/>
            <person name="Okitani R."/>
            <person name="Kawakami T."/>
            <person name="Noguchi S."/>
            <person name="Itoh T."/>
            <person name="Shigeta K."/>
            <person name="Senba T."/>
            <person name="Matsumura K."/>
            <person name="Nakajima Y."/>
            <person name="Mizuno T."/>
            <person name="Morinaga M."/>
            <person name="Sasaki M."/>
            <person name="Togashi T."/>
            <person name="Oyama M."/>
            <person name="Hata H."/>
            <person name="Watanabe M."/>
            <person name="Komatsu T."/>
            <person name="Mizushima-Sugano J."/>
            <person name="Satoh T."/>
            <person name="Shirai Y."/>
            <person name="Takahashi Y."/>
            <person name="Nakagawa K."/>
            <person name="Okumura K."/>
            <person name="Nagase T."/>
            <person name="Nomura N."/>
            <person name="Kikuchi H."/>
            <person name="Masuho Y."/>
            <person name="Yamashita R."/>
            <person name="Nakai K."/>
            <person name="Yada T."/>
            <person name="Nakamura Y."/>
            <person name="Ohara O."/>
            <person name="Isogai T."/>
            <person name="Sugano S."/>
        </authorList>
    </citation>
    <scope>NUCLEOTIDE SEQUENCE [LARGE SCALE MRNA] (ISOFORM 3)</scope>
    <source>
        <tissue>Mammary gland</tissue>
    </source>
</reference>
<reference key="4">
    <citation type="journal article" date="2004" name="Nature">
        <title>The DNA sequence and comparative analysis of human chromosome 10.</title>
        <authorList>
            <person name="Deloukas P."/>
            <person name="Earthrowl M.E."/>
            <person name="Grafham D.V."/>
            <person name="Rubenfield M."/>
            <person name="French L."/>
            <person name="Steward C.A."/>
            <person name="Sims S.K."/>
            <person name="Jones M.C."/>
            <person name="Searle S."/>
            <person name="Scott C."/>
            <person name="Howe K."/>
            <person name="Hunt S.E."/>
            <person name="Andrews T.D."/>
            <person name="Gilbert J.G.R."/>
            <person name="Swarbreck D."/>
            <person name="Ashurst J.L."/>
            <person name="Taylor A."/>
            <person name="Battles J."/>
            <person name="Bird C.P."/>
            <person name="Ainscough R."/>
            <person name="Almeida J.P."/>
            <person name="Ashwell R.I.S."/>
            <person name="Ambrose K.D."/>
            <person name="Babbage A.K."/>
            <person name="Bagguley C.L."/>
            <person name="Bailey J."/>
            <person name="Banerjee R."/>
            <person name="Bates K."/>
            <person name="Beasley H."/>
            <person name="Bray-Allen S."/>
            <person name="Brown A.J."/>
            <person name="Brown J.Y."/>
            <person name="Burford D.C."/>
            <person name="Burrill W."/>
            <person name="Burton J."/>
            <person name="Cahill P."/>
            <person name="Camire D."/>
            <person name="Carter N.P."/>
            <person name="Chapman J.C."/>
            <person name="Clark S.Y."/>
            <person name="Clarke G."/>
            <person name="Clee C.M."/>
            <person name="Clegg S."/>
            <person name="Corby N."/>
            <person name="Coulson A."/>
            <person name="Dhami P."/>
            <person name="Dutta I."/>
            <person name="Dunn M."/>
            <person name="Faulkner L."/>
            <person name="Frankish A."/>
            <person name="Frankland J.A."/>
            <person name="Garner P."/>
            <person name="Garnett J."/>
            <person name="Gribble S."/>
            <person name="Griffiths C."/>
            <person name="Grocock R."/>
            <person name="Gustafson E."/>
            <person name="Hammond S."/>
            <person name="Harley J.L."/>
            <person name="Hart E."/>
            <person name="Heath P.D."/>
            <person name="Ho T.P."/>
            <person name="Hopkins B."/>
            <person name="Horne J."/>
            <person name="Howden P.J."/>
            <person name="Huckle E."/>
            <person name="Hynds C."/>
            <person name="Johnson C."/>
            <person name="Johnson D."/>
            <person name="Kana A."/>
            <person name="Kay M."/>
            <person name="Kimberley A.M."/>
            <person name="Kershaw J.K."/>
            <person name="Kokkinaki M."/>
            <person name="Laird G.K."/>
            <person name="Lawlor S."/>
            <person name="Lee H.M."/>
            <person name="Leongamornlert D.A."/>
            <person name="Laird G."/>
            <person name="Lloyd C."/>
            <person name="Lloyd D.M."/>
            <person name="Loveland J."/>
            <person name="Lovell J."/>
            <person name="McLaren S."/>
            <person name="McLay K.E."/>
            <person name="McMurray A."/>
            <person name="Mashreghi-Mohammadi M."/>
            <person name="Matthews L."/>
            <person name="Milne S."/>
            <person name="Nickerson T."/>
            <person name="Nguyen M."/>
            <person name="Overton-Larty E."/>
            <person name="Palmer S.A."/>
            <person name="Pearce A.V."/>
            <person name="Peck A.I."/>
            <person name="Pelan S."/>
            <person name="Phillimore B."/>
            <person name="Porter K."/>
            <person name="Rice C.M."/>
            <person name="Rogosin A."/>
            <person name="Ross M.T."/>
            <person name="Sarafidou T."/>
            <person name="Sehra H.K."/>
            <person name="Shownkeen R."/>
            <person name="Skuce C.D."/>
            <person name="Smith M."/>
            <person name="Standring L."/>
            <person name="Sycamore N."/>
            <person name="Tester J."/>
            <person name="Thorpe A."/>
            <person name="Torcasso W."/>
            <person name="Tracey A."/>
            <person name="Tromans A."/>
            <person name="Tsolas J."/>
            <person name="Wall M."/>
            <person name="Walsh J."/>
            <person name="Wang H."/>
            <person name="Weinstock K."/>
            <person name="West A.P."/>
            <person name="Willey D.L."/>
            <person name="Whitehead S.L."/>
            <person name="Wilming L."/>
            <person name="Wray P.W."/>
            <person name="Young L."/>
            <person name="Chen Y."/>
            <person name="Lovering R.C."/>
            <person name="Moschonas N.K."/>
            <person name="Siebert R."/>
            <person name="Fechtel K."/>
            <person name="Bentley D."/>
            <person name="Durbin R.M."/>
            <person name="Hubbard T."/>
            <person name="Doucette-Stamm L."/>
            <person name="Beck S."/>
            <person name="Smith D.R."/>
            <person name="Rogers J."/>
        </authorList>
    </citation>
    <scope>NUCLEOTIDE SEQUENCE [LARGE SCALE GENOMIC DNA]</scope>
</reference>
<reference key="5">
    <citation type="submission" date="2005-09" db="EMBL/GenBank/DDBJ databases">
        <authorList>
            <person name="Mural R.J."/>
            <person name="Istrail S."/>
            <person name="Sutton G.G."/>
            <person name="Florea L."/>
            <person name="Halpern A.L."/>
            <person name="Mobarry C.M."/>
            <person name="Lippert R."/>
            <person name="Walenz B."/>
            <person name="Shatkay H."/>
            <person name="Dew I."/>
            <person name="Miller J.R."/>
            <person name="Flanigan M.J."/>
            <person name="Edwards N.J."/>
            <person name="Bolanos R."/>
            <person name="Fasulo D."/>
            <person name="Halldorsson B.V."/>
            <person name="Hannenhalli S."/>
            <person name="Turner R."/>
            <person name="Yooseph S."/>
            <person name="Lu F."/>
            <person name="Nusskern D.R."/>
            <person name="Shue B.C."/>
            <person name="Zheng X.H."/>
            <person name="Zhong F."/>
            <person name="Delcher A.L."/>
            <person name="Huson D.H."/>
            <person name="Kravitz S.A."/>
            <person name="Mouchard L."/>
            <person name="Reinert K."/>
            <person name="Remington K.A."/>
            <person name="Clark A.G."/>
            <person name="Waterman M.S."/>
            <person name="Eichler E.E."/>
            <person name="Adams M.D."/>
            <person name="Hunkapiller M.W."/>
            <person name="Myers E.W."/>
            <person name="Venter J.C."/>
        </authorList>
    </citation>
    <scope>NUCLEOTIDE SEQUENCE [LARGE SCALE GENOMIC DNA]</scope>
</reference>
<reference key="6">
    <citation type="journal article" date="2004" name="Genome Res.">
        <title>The status, quality, and expansion of the NIH full-length cDNA project: the Mammalian Gene Collection (MGC).</title>
        <authorList>
            <consortium name="The MGC Project Team"/>
        </authorList>
    </citation>
    <scope>NUCLEOTIDE SEQUENCE [LARGE SCALE MRNA] (ISOFORM 1)</scope>
    <source>
        <tissue>Placenta</tissue>
        <tissue>PNS</tissue>
    </source>
</reference>
<reference key="7">
    <citation type="submission" date="2008-12" db="UniProtKB">
        <authorList>
            <person name="Lubec G."/>
            <person name="Chen W.-Q."/>
            <person name="Sun Y."/>
        </authorList>
    </citation>
    <scope>PROTEIN SEQUENCE OF 5-16 AND 64-76</scope>
    <scope>IDENTIFICATION BY MASS SPECTROMETRY</scope>
    <source>
        <tissue>Fetal brain cortex</tissue>
    </source>
</reference>
<reference key="8">
    <citation type="journal article" date="2009" name="Anal. Chem.">
        <title>Lys-N and trypsin cover complementary parts of the phosphoproteome in a refined SCX-based approach.</title>
        <authorList>
            <person name="Gauci S."/>
            <person name="Helbig A.O."/>
            <person name="Slijper M."/>
            <person name="Krijgsveld J."/>
            <person name="Heck A.J."/>
            <person name="Mohammed S."/>
        </authorList>
    </citation>
    <scope>ACETYLATION [LARGE SCALE ANALYSIS] AT SER-2</scope>
    <scope>CLEAVAGE OF INITIATOR METHIONINE [LARGE SCALE ANALYSIS]</scope>
    <scope>IDENTIFICATION BY MASS SPECTROMETRY [LARGE SCALE ANALYSIS]</scope>
</reference>
<reference key="9">
    <citation type="journal article" date="2010" name="Sci. Signal.">
        <title>Quantitative phosphoproteomics reveals widespread full phosphorylation site occupancy during mitosis.</title>
        <authorList>
            <person name="Olsen J.V."/>
            <person name="Vermeulen M."/>
            <person name="Santamaria A."/>
            <person name="Kumar C."/>
            <person name="Miller M.L."/>
            <person name="Jensen L.J."/>
            <person name="Gnad F."/>
            <person name="Cox J."/>
            <person name="Jensen T.S."/>
            <person name="Nigg E.A."/>
            <person name="Brunak S."/>
            <person name="Mann M."/>
        </authorList>
    </citation>
    <scope>IDENTIFICATION BY MASS SPECTROMETRY [LARGE SCALE ANALYSIS]</scope>
    <source>
        <tissue>Cervix carcinoma</tissue>
    </source>
</reference>
<reference key="10">
    <citation type="journal article" date="2011" name="BMC Syst. Biol.">
        <title>Initial characterization of the human central proteome.</title>
        <authorList>
            <person name="Burkard T.R."/>
            <person name="Planyavsky M."/>
            <person name="Kaupe I."/>
            <person name="Breitwieser F.P."/>
            <person name="Buerckstuemmer T."/>
            <person name="Bennett K.L."/>
            <person name="Superti-Furga G."/>
            <person name="Colinge J."/>
        </authorList>
    </citation>
    <scope>IDENTIFICATION BY MASS SPECTROMETRY [LARGE SCALE ANALYSIS]</scope>
</reference>
<reference key="11">
    <citation type="journal article" date="2014" name="J. Proteomics">
        <title>An enzyme assisted RP-RPLC approach for in-depth analysis of human liver phosphoproteome.</title>
        <authorList>
            <person name="Bian Y."/>
            <person name="Song C."/>
            <person name="Cheng K."/>
            <person name="Dong M."/>
            <person name="Wang F."/>
            <person name="Huang J."/>
            <person name="Sun D."/>
            <person name="Wang L."/>
            <person name="Ye M."/>
            <person name="Zou H."/>
        </authorList>
    </citation>
    <scope>IDENTIFICATION BY MASS SPECTROMETRY [LARGE SCALE ANALYSIS]</scope>
    <source>
        <tissue>Liver</tissue>
    </source>
</reference>
<reference key="12">
    <citation type="journal article" date="2009" name="J. Mol. Biol.">
        <title>Crystal structures of catalytic intermediates of human selenophosphate synthetase 1.</title>
        <authorList>
            <person name="Wang K.T."/>
            <person name="Wang J."/>
            <person name="Li L.F."/>
            <person name="Su X.D."/>
        </authorList>
    </citation>
    <scope>X-RAY CRYSTALLOGRAPHY (1.9 ANGSTROMS) IN COMPLEX WITH ADP; MAGNESIUM IONS AND PHOSPHATE</scope>
    <scope>SUBUNIT</scope>
    <scope>ACTIVITY REGULATION</scope>
    <scope>MUTAGENESIS OF THR-85</scope>
</reference>
<feature type="initiator methionine" description="Removed" evidence="11">
    <location>
        <position position="1"/>
    </location>
</feature>
<feature type="chain" id="PRO_0000127648" description="Selenide, water dikinase 1">
    <location>
        <begin position="2"/>
        <end position="392"/>
    </location>
</feature>
<feature type="active site" evidence="2">
    <location>
        <position position="31"/>
    </location>
</feature>
<feature type="binding site" description="in other chain" evidence="3 9 10">
    <location>
        <position position="32"/>
    </location>
    <ligand>
        <name>ATP</name>
        <dbReference type="ChEBI" id="CHEBI:30616"/>
        <note>ligand shared between dimeric partners</note>
    </ligand>
</feature>
<feature type="binding site" description="in other chain" evidence="3 9 10">
    <location>
        <begin position="67"/>
        <end position="69"/>
    </location>
    <ligand>
        <name>ATP</name>
        <dbReference type="ChEBI" id="CHEBI:30616"/>
        <note>ligand shared between dimeric partners</note>
    </ligand>
</feature>
<feature type="binding site" evidence="3 10">
    <location>
        <position position="69"/>
    </location>
    <ligand>
        <name>Mg(2+)</name>
        <dbReference type="ChEBI" id="CHEBI:18420"/>
    </ligand>
</feature>
<feature type="binding site" description="in other chain" evidence="3 9">
    <location>
        <position position="87"/>
    </location>
    <ligand>
        <name>ATP</name>
        <dbReference type="ChEBI" id="CHEBI:30616"/>
        <note>ligand shared between dimeric partners</note>
    </ligand>
</feature>
<feature type="binding site" description="in other chain" evidence="3 9 10">
    <location>
        <position position="110"/>
    </location>
    <ligand>
        <name>ATP</name>
        <dbReference type="ChEBI" id="CHEBI:30616"/>
        <note>ligand shared between dimeric partners</note>
    </ligand>
</feature>
<feature type="binding site" evidence="3 10">
    <location>
        <position position="110"/>
    </location>
    <ligand>
        <name>Mg(2+)</name>
        <dbReference type="ChEBI" id="CHEBI:18420"/>
    </ligand>
</feature>
<feature type="binding site" evidence="3 9 10">
    <location>
        <begin position="161"/>
        <end position="164"/>
    </location>
    <ligand>
        <name>ATP</name>
        <dbReference type="ChEBI" id="CHEBI:30616"/>
        <note>ligand shared between dimeric partners</note>
    </ligand>
</feature>
<feature type="binding site" evidence="3 10">
    <location>
        <position position="265"/>
    </location>
    <ligand>
        <name>Mg(2+)</name>
        <dbReference type="ChEBI" id="CHEBI:18420"/>
    </ligand>
</feature>
<feature type="site" description="Important for catalytic activity" evidence="1">
    <location>
        <position position="32"/>
    </location>
</feature>
<feature type="modified residue" description="N-acetylserine" evidence="11">
    <location>
        <position position="2"/>
    </location>
</feature>
<feature type="splice variant" id="VSP_046701" description="In isoform 3." evidence="6 7">
    <location>
        <begin position="1"/>
        <end position="67"/>
    </location>
</feature>
<feature type="splice variant" id="VSP_046702" description="In isoform 2." evidence="7">
    <location>
        <begin position="251"/>
        <end position="321"/>
    </location>
</feature>
<feature type="splice variant" id="VSP_047451" description="In isoform 4." evidence="7">
    <original>GGLLICLPREQAARFCAEIKSPKYGEGHQAWIIGIVEKGNRTARIIDKPRIIEVAPQVATQNVNPTPGATS</original>
    <variation>DVQ</variation>
    <location>
        <begin position="322"/>
        <end position="392"/>
    </location>
</feature>
<feature type="mutagenesis site" description="Strongly reduced ADP hydrolysis." evidence="3">
    <original>T</original>
    <variation>A</variation>
    <location>
        <position position="85"/>
    </location>
</feature>
<feature type="mutagenesis site" description="No change in ATP-binding." evidence="5">
    <original>G</original>
    <variation>C</variation>
    <location>
        <position position="268"/>
    </location>
</feature>
<feature type="mutagenesis site" description="No change in ATP-binding." evidence="5">
    <original>G</original>
    <variation>R</variation>
    <location>
        <position position="270"/>
    </location>
</feature>
<feature type="mutagenesis site" description="Loss of ATP-binding." evidence="5">
    <original>G</original>
    <variation>A</variation>
    <variation>D</variation>
    <variation>V</variation>
    <location>
        <position position="273"/>
    </location>
</feature>
<feature type="mutagenesis site" description="Reduced ATP-binding." evidence="5">
    <original>H</original>
    <variation>N</variation>
    <location>
        <position position="274"/>
    </location>
</feature>
<feature type="mutagenesis site" description="Increased ATP-binding." evidence="5">
    <original>H</original>
    <variation>Y</variation>
    <location>
        <position position="274"/>
    </location>
</feature>
<feature type="sequence conflict" description="In Ref. 1; AAA87567." evidence="8" ref="1">
    <original>A</original>
    <variation>T</variation>
    <location>
        <position position="260"/>
    </location>
</feature>
<feature type="helix" evidence="12">
    <location>
        <begin position="10"/>
        <end position="12"/>
    </location>
</feature>
<feature type="helix" evidence="12">
    <location>
        <begin position="20"/>
        <end position="23"/>
    </location>
</feature>
<feature type="helix" evidence="12">
    <location>
        <begin position="35"/>
        <end position="42"/>
    </location>
</feature>
<feature type="strand" evidence="12">
    <location>
        <begin position="68"/>
        <end position="74"/>
    </location>
</feature>
<feature type="strand" evidence="12">
    <location>
        <begin position="81"/>
        <end position="89"/>
    </location>
</feature>
<feature type="helix" evidence="12">
    <location>
        <begin position="96"/>
        <end position="113"/>
    </location>
</feature>
<feature type="strand" evidence="12">
    <location>
        <begin position="120"/>
        <end position="129"/>
    </location>
</feature>
<feature type="helix" evidence="12">
    <location>
        <begin position="134"/>
        <end position="154"/>
    </location>
</feature>
<feature type="strand" evidence="12">
    <location>
        <begin position="159"/>
        <end position="169"/>
    </location>
</feature>
<feature type="strand" evidence="12">
    <location>
        <begin position="171"/>
        <end position="180"/>
    </location>
</feature>
<feature type="helix" evidence="12">
    <location>
        <begin position="182"/>
        <end position="184"/>
    </location>
</feature>
<feature type="strand" evidence="12">
    <location>
        <begin position="196"/>
        <end position="201"/>
    </location>
</feature>
<feature type="helix" evidence="12">
    <location>
        <begin position="205"/>
        <end position="213"/>
    </location>
</feature>
<feature type="helix" evidence="12">
    <location>
        <begin position="218"/>
        <end position="224"/>
    </location>
</feature>
<feature type="helix" evidence="12">
    <location>
        <begin position="230"/>
        <end position="245"/>
    </location>
</feature>
<feature type="helix" evidence="12">
    <location>
        <begin position="249"/>
        <end position="257"/>
    </location>
</feature>
<feature type="strand" evidence="12">
    <location>
        <begin position="262"/>
        <end position="265"/>
    </location>
</feature>
<feature type="helix" evidence="12">
    <location>
        <begin position="270"/>
        <end position="279"/>
    </location>
</feature>
<feature type="strand" evidence="12">
    <location>
        <begin position="283"/>
        <end position="296"/>
    </location>
</feature>
<feature type="helix" evidence="12">
    <location>
        <begin position="299"/>
        <end position="305"/>
    </location>
</feature>
<feature type="turn" evidence="12">
    <location>
        <begin position="306"/>
        <end position="308"/>
    </location>
</feature>
<feature type="helix" evidence="12">
    <location>
        <begin position="312"/>
        <end position="314"/>
    </location>
</feature>
<feature type="strand" evidence="12">
    <location>
        <begin position="324"/>
        <end position="328"/>
    </location>
</feature>
<feature type="helix" evidence="12">
    <location>
        <begin position="330"/>
        <end position="341"/>
    </location>
</feature>
<feature type="strand" evidence="12">
    <location>
        <begin position="352"/>
        <end position="362"/>
    </location>
</feature>
<feature type="strand" evidence="12">
    <location>
        <begin position="364"/>
        <end position="375"/>
    </location>
</feature>
<comment type="function">
    <text evidence="5">Synthesizes selenophosphate from selenide and ATP.</text>
</comment>
<comment type="catalytic activity">
    <reaction evidence="5">
        <text>hydrogenselenide + ATP + H2O = selenophosphate + AMP + phosphate + 2 H(+)</text>
        <dbReference type="Rhea" id="RHEA:18737"/>
        <dbReference type="ChEBI" id="CHEBI:15377"/>
        <dbReference type="ChEBI" id="CHEBI:15378"/>
        <dbReference type="ChEBI" id="CHEBI:16144"/>
        <dbReference type="ChEBI" id="CHEBI:29317"/>
        <dbReference type="ChEBI" id="CHEBI:30616"/>
        <dbReference type="ChEBI" id="CHEBI:43474"/>
        <dbReference type="ChEBI" id="CHEBI:456215"/>
        <dbReference type="EC" id="2.7.9.3"/>
    </reaction>
</comment>
<comment type="cofactor">
    <cofactor evidence="3">
        <name>Mg(2+)</name>
        <dbReference type="ChEBI" id="CHEBI:18420"/>
    </cofactor>
    <text evidence="3">Binds 1 Mg(2+) ion per monomer.</text>
</comment>
<comment type="activity regulation">
    <text evidence="3">Activated by phosphate ions and by potassium ions.</text>
</comment>
<comment type="subunit">
    <molecule>Isoform 1</molecule>
    <text evidence="3 4">Homodimer (PubMed:19477186, PubMed:20471958). Heterodimer with isoform 3 (PubMed:20471958).</text>
</comment>
<comment type="subunit">
    <molecule>Isoform 2</molecule>
    <text evidence="4">Homodimer (PubMed:20471958). Heterodimer with isoform 4 (PubMed:20471958).</text>
</comment>
<comment type="subunit">
    <molecule>Isoform 3</molecule>
    <text evidence="4">Homodimer (PubMed:20471958). Heterodimer with isoform 1 (PubMed:20471958).</text>
</comment>
<comment type="subunit">
    <molecule>Isoform 4</molecule>
    <text evidence="4">Homodimer (PubMed:20471958). Heterodimer with isoform 2 (PubMed:20471958).</text>
</comment>
<comment type="interaction">
    <interactant intactId="EBI-714091">
        <id>P49903</id>
    </interactant>
    <interactant intactId="EBI-2876622">
        <id>Q9UPG8</id>
        <label>PLAGL2</label>
    </interactant>
    <organismsDiffer>false</organismsDiffer>
    <experiments>3</experiments>
</comment>
<comment type="interaction">
    <interactant intactId="EBI-714091">
        <id>P49903</id>
    </interactant>
    <interactant intactId="EBI-2798044">
        <id>Q2TAL8</id>
        <label>QRICH1</label>
    </interactant>
    <organismsDiffer>false</organismsDiffer>
    <experiments>9</experiments>
</comment>
<comment type="interaction">
    <interactant intactId="EBI-714091">
        <id>P49903</id>
    </interactant>
    <interactant intactId="EBI-714091">
        <id>P49903</id>
        <label>SEPHS1</label>
    </interactant>
    <organismsDiffer>false</organismsDiffer>
    <experiments>6</experiments>
</comment>
<comment type="interaction">
    <interactant intactId="EBI-714091">
        <id>P49903</id>
    </interactant>
    <interactant intactId="EBI-3937791">
        <id>Q99611</id>
        <label>SEPHS2</label>
    </interactant>
    <organismsDiffer>false</organismsDiffer>
    <experiments>2</experiments>
</comment>
<comment type="interaction">
    <interactant intactId="EBI-714091">
        <id>P49903</id>
    </interactant>
    <interactant intactId="EBI-2815120">
        <id>Q6GPH4</id>
        <label>XAF1</label>
    </interactant>
    <organismsDiffer>false</organismsDiffer>
    <experiments>3</experiments>
</comment>
<comment type="interaction">
    <interactant intactId="EBI-714091">
        <id>P49903</id>
    </interactant>
    <interactant intactId="EBI-739899">
        <id>P24278</id>
        <label>ZBTB25</label>
    </interactant>
    <organismsDiffer>false</organismsDiffer>
    <experiments>7</experiments>
</comment>
<comment type="interaction">
    <interactant intactId="EBI-714091">
        <id>P49903</id>
    </interactant>
    <interactant intactId="EBI-751960">
        <id>O95125</id>
        <label>ZNF202</label>
    </interactant>
    <organismsDiffer>false</organismsDiffer>
    <experiments>5</experiments>
</comment>
<comment type="interaction">
    <interactant intactId="EBI-714091">
        <id>P49903</id>
    </interactant>
    <interactant intactId="EBI-750821">
        <id>Q8N554</id>
        <label>ZNF276</label>
    </interactant>
    <organismsDiffer>false</organismsDiffer>
    <experiments>3</experiments>
</comment>
<comment type="interaction">
    <interactant intactId="EBI-714091">
        <id>P49903</id>
    </interactant>
    <interactant intactId="EBI-17269964">
        <id>Q6S9Z5</id>
        <label>ZNF474</label>
    </interactant>
    <organismsDiffer>false</organismsDiffer>
    <experiments>3</experiments>
</comment>
<comment type="interaction">
    <interactant intactId="EBI-714091">
        <id>P49903</id>
    </interactant>
    <interactant intactId="EBI-11035148">
        <id>Q8TF50</id>
        <label>ZNF526</label>
    </interactant>
    <organismsDiffer>false</organismsDiffer>
    <experiments>3</experiments>
</comment>
<comment type="subcellular location">
    <molecule>Isoform 1</molecule>
    <subcellularLocation>
        <location evidence="4">Cell membrane</location>
        <topology evidence="8">Peripheral membrane protein</topology>
    </subcellularLocation>
    <subcellularLocation>
        <location evidence="4">Nucleus membrane</location>
        <topology evidence="8">Peripheral membrane protein</topology>
    </subcellularLocation>
</comment>
<comment type="subcellular location">
    <molecule>Isoform 2</molecule>
    <subcellularLocation>
        <location evidence="4">Cytoplasm</location>
    </subcellularLocation>
</comment>
<comment type="subcellular location">
    <molecule>Isoform 3</molecule>
    <subcellularLocation>
        <location evidence="4">Cytoplasm</location>
    </subcellularLocation>
</comment>
<comment type="subcellular location">
    <molecule>Isoform 4</molecule>
    <subcellularLocation>
        <location evidence="4">Cytoplasm</location>
    </subcellularLocation>
</comment>
<comment type="alternative products">
    <event type="alternative splicing"/>
    <isoform>
        <id>P49903-1</id>
        <name>1</name>
        <name>Major type</name>
        <name>MT</name>
        <sequence type="displayed"/>
    </isoform>
    <isoform>
        <id>P49903-2</id>
        <name>2</name>
        <name>Delta E8</name>
        <sequence type="described" ref="VSP_046702"/>
    </isoform>
    <isoform>
        <id>P49903-3</id>
        <name>3</name>
        <name>Delta E2</name>
        <sequence type="described" ref="VSP_046701"/>
    </isoform>
    <isoform>
        <id>P49903-4</id>
        <name>4</name>
        <name>E9</name>
        <name>E9a</name>
        <sequence type="described" ref="VSP_047451"/>
    </isoform>
</comment>
<comment type="tissue specificity">
    <molecule>Isoform 1</molecule>
    <text evidence="4">Gradually expressed during the cell cycle until G2/M phase and then decreases.</text>
</comment>
<comment type="tissue specificity">
    <molecule>Isoform 2</molecule>
    <text evidence="4">Gradually expressed during the cell cycle until G2/M phase and then decreases.</text>
</comment>
<comment type="tissue specificity">
    <molecule>Isoform 3</molecule>
    <text evidence="4">Gradually expressed during the cell cycle until S phase and then decreases.</text>
</comment>
<comment type="similarity">
    <text evidence="8">Belongs to the selenophosphate synthase 1 family. Class II subfamily.</text>
</comment>
<comment type="caution">
    <text evidence="8">The conserved active site Cys (or selenocysteine) residue in position 29 is replaced by a Thr. However, as function in selenoprotein synthesis is proven, it is possible Cys-31 is the active site.</text>
</comment>
<comment type="sequence caution" evidence="8">
    <conflict type="frameshift">
        <sequence resource="EMBL-CDS" id="AAA87567"/>
    </conflict>
</comment>